<sequence>SNKKDYRKEIVDKHNALSRSVKPTASNM</sequence>
<organism evidence="4">
    <name type="scientific">Austrelaps superbus</name>
    <name type="common">Lowland copperhead snake</name>
    <name type="synonym">Hoplocephalus superbus</name>
    <dbReference type="NCBI Taxonomy" id="29156"/>
    <lineage>
        <taxon>Eukaryota</taxon>
        <taxon>Metazoa</taxon>
        <taxon>Chordata</taxon>
        <taxon>Craniata</taxon>
        <taxon>Vertebrata</taxon>
        <taxon>Euteleostomi</taxon>
        <taxon>Lepidosauria</taxon>
        <taxon>Squamata</taxon>
        <taxon>Bifurcata</taxon>
        <taxon>Unidentata</taxon>
        <taxon>Episquamata</taxon>
        <taxon>Toxicofera</taxon>
        <taxon>Serpentes</taxon>
        <taxon>Colubroidea</taxon>
        <taxon>Elapidae</taxon>
        <taxon>Hydrophiinae</taxon>
        <taxon>Austrelaps</taxon>
    </lineage>
</organism>
<name>CRVP2_AUSSU</name>
<keyword id="KW-0108">Calcium channel impairing toxin</keyword>
<keyword id="KW-0903">Direct protein sequencing</keyword>
<keyword id="KW-1015">Disulfide bond</keyword>
<keyword id="KW-0872">Ion channel impairing toxin</keyword>
<keyword id="KW-0528">Neurotoxin</keyword>
<keyword id="KW-0964">Secreted</keyword>
<keyword id="KW-0800">Toxin</keyword>
<comment type="function">
    <text evidence="1">Blocks contraction of smooth muscle elicited by high potassium-induced depolarization, but does not block caffeine-stimulated contraction. May target voltage-gated calcium channels on smooth muscle (By similarity).</text>
</comment>
<comment type="subcellular location">
    <subcellularLocation>
        <location evidence="4">Secreted</location>
    </subcellularLocation>
</comment>
<comment type="tissue specificity">
    <text evidence="4">Expressed by the venom gland.</text>
</comment>
<comment type="PTM">
    <text evidence="2">Contains 8 disulfide bonds.</text>
</comment>
<comment type="similarity">
    <text evidence="4">Belongs to the CRISP family.</text>
</comment>
<protein>
    <recommendedName>
        <fullName>Cysteine-rich venom protein asurin-2</fullName>
    </recommendedName>
</protein>
<proteinExistence type="evidence at protein level"/>
<reference evidence="4" key="1">
    <citation type="submission" date="1999-08" db="UniProtKB">
        <authorList>
            <person name="Kini M.R."/>
        </authorList>
    </citation>
    <scope>PROTEIN SEQUENCE</scope>
    <source>
        <tissue evidence="4">Venom</tissue>
    </source>
</reference>
<feature type="chain" id="PRO_0000211528" description="Cysteine-rich venom protein asurin-2">
    <location>
        <begin position="1"/>
        <end position="28" status="greater than"/>
    </location>
</feature>
<feature type="region of interest" description="Disordered" evidence="3">
    <location>
        <begin position="1"/>
        <end position="28"/>
    </location>
</feature>
<feature type="compositionally biased region" description="Basic and acidic residues" evidence="3">
    <location>
        <begin position="1"/>
        <end position="15"/>
    </location>
</feature>
<feature type="compositionally biased region" description="Polar residues" evidence="3">
    <location>
        <begin position="17"/>
        <end position="28"/>
    </location>
</feature>
<feature type="non-terminal residue" evidence="4">
    <location>
        <position position="28"/>
    </location>
</feature>
<evidence type="ECO:0000250" key="1"/>
<evidence type="ECO:0000250" key="2">
    <source>
        <dbReference type="UniProtKB" id="P84808"/>
    </source>
</evidence>
<evidence type="ECO:0000256" key="3">
    <source>
        <dbReference type="SAM" id="MobiDB-lite"/>
    </source>
</evidence>
<evidence type="ECO:0000305" key="4"/>
<dbReference type="SMR" id="P81992"/>
<dbReference type="GO" id="GO:0005576">
    <property type="term" value="C:extracellular region"/>
    <property type="evidence" value="ECO:0007669"/>
    <property type="project" value="UniProtKB-SubCell"/>
</dbReference>
<dbReference type="GO" id="GO:0005246">
    <property type="term" value="F:calcium channel regulator activity"/>
    <property type="evidence" value="ECO:0007669"/>
    <property type="project" value="UniProtKB-KW"/>
</dbReference>
<dbReference type="GO" id="GO:0090729">
    <property type="term" value="F:toxin activity"/>
    <property type="evidence" value="ECO:0007669"/>
    <property type="project" value="UniProtKB-KW"/>
</dbReference>
<accession>P81992</accession>